<accession>P0A9N9</accession>
<accession>P39329</accession>
<organism>
    <name type="scientific">Escherichia coli O157:H7</name>
    <dbReference type="NCBI Taxonomy" id="83334"/>
    <lineage>
        <taxon>Bacteria</taxon>
        <taxon>Pseudomonadati</taxon>
        <taxon>Pseudomonadota</taxon>
        <taxon>Gammaproteobacteria</taxon>
        <taxon>Enterobacterales</taxon>
        <taxon>Enterobacteriaceae</taxon>
        <taxon>Escherichia</taxon>
    </lineage>
</organism>
<reference key="1">
    <citation type="journal article" date="2001" name="Nature">
        <title>Genome sequence of enterohaemorrhagic Escherichia coli O157:H7.</title>
        <authorList>
            <person name="Perna N.T."/>
            <person name="Plunkett G. III"/>
            <person name="Burland V."/>
            <person name="Mau B."/>
            <person name="Glasner J.D."/>
            <person name="Rose D.J."/>
            <person name="Mayhew G.F."/>
            <person name="Evans P.S."/>
            <person name="Gregor J."/>
            <person name="Kirkpatrick H.A."/>
            <person name="Posfai G."/>
            <person name="Hackett J."/>
            <person name="Klink S."/>
            <person name="Boutin A."/>
            <person name="Shao Y."/>
            <person name="Miller L."/>
            <person name="Grotbeck E.J."/>
            <person name="Davis N.W."/>
            <person name="Lim A."/>
            <person name="Dimalanta E.T."/>
            <person name="Potamousis K."/>
            <person name="Apodaca J."/>
            <person name="Anantharaman T.S."/>
            <person name="Lin J."/>
            <person name="Yen G."/>
            <person name="Schwartz D.C."/>
            <person name="Welch R.A."/>
            <person name="Blattner F.R."/>
        </authorList>
    </citation>
    <scope>NUCLEOTIDE SEQUENCE [LARGE SCALE GENOMIC DNA]</scope>
    <source>
        <strain>O157:H7 / EDL933 / ATCC 700927 / EHEC</strain>
    </source>
</reference>
<reference key="2">
    <citation type="journal article" date="2001" name="DNA Res.">
        <title>Complete genome sequence of enterohemorrhagic Escherichia coli O157:H7 and genomic comparison with a laboratory strain K-12.</title>
        <authorList>
            <person name="Hayashi T."/>
            <person name="Makino K."/>
            <person name="Ohnishi M."/>
            <person name="Kurokawa K."/>
            <person name="Ishii K."/>
            <person name="Yokoyama K."/>
            <person name="Han C.-G."/>
            <person name="Ohtsubo E."/>
            <person name="Nakayama K."/>
            <person name="Murata T."/>
            <person name="Tanaka M."/>
            <person name="Tobe T."/>
            <person name="Iida T."/>
            <person name="Takami H."/>
            <person name="Honda T."/>
            <person name="Sasakawa C."/>
            <person name="Ogasawara N."/>
            <person name="Yasunaga T."/>
            <person name="Kuhara S."/>
            <person name="Shiba T."/>
            <person name="Hattori M."/>
            <person name="Shinagawa H."/>
        </authorList>
    </citation>
    <scope>NUCLEOTIDE SEQUENCE [LARGE SCALE GENOMIC DNA]</scope>
    <source>
        <strain>O157:H7 / Sakai / RIMD 0509952 / EHEC</strain>
    </source>
</reference>
<name>NRDG_ECO57</name>
<comment type="function">
    <text evidence="2">Activation of anaerobic ribonucleoside-triphosphate reductase under anaerobic conditions by generation of an organic free radical, using S-adenosylmethionine and reduced flavodoxin as cosubstrates to produce 5'-deoxy-adenosine.</text>
</comment>
<comment type="catalytic activity">
    <reaction evidence="2">
        <text>glycyl-[protein] + reduced [flavodoxin] + S-adenosyl-L-methionine = glycin-2-yl radical-[protein] + semiquinone [flavodoxin] + 5'-deoxyadenosine + L-methionine + H(+)</text>
        <dbReference type="Rhea" id="RHEA:61976"/>
        <dbReference type="Rhea" id="RHEA-COMP:10622"/>
        <dbReference type="Rhea" id="RHEA-COMP:14480"/>
        <dbReference type="Rhea" id="RHEA-COMP:15993"/>
        <dbReference type="Rhea" id="RHEA-COMP:15994"/>
        <dbReference type="ChEBI" id="CHEBI:15378"/>
        <dbReference type="ChEBI" id="CHEBI:17319"/>
        <dbReference type="ChEBI" id="CHEBI:29947"/>
        <dbReference type="ChEBI" id="CHEBI:32722"/>
        <dbReference type="ChEBI" id="CHEBI:57618"/>
        <dbReference type="ChEBI" id="CHEBI:57844"/>
        <dbReference type="ChEBI" id="CHEBI:59789"/>
        <dbReference type="ChEBI" id="CHEBI:140311"/>
    </reaction>
</comment>
<comment type="cofactor">
    <cofactor evidence="2">
        <name>[4Fe-4S] cluster</name>
        <dbReference type="ChEBI" id="CHEBI:49883"/>
    </cofactor>
    <text evidence="1">Binds 1 [4Fe-4S] cluster. The cluster is coordinated with 3 cysteines and an exchangeable S-adenosyl-L-methionine.</text>
</comment>
<comment type="subunit">
    <text evidence="2">Forms a tetramer composed of two NrdD and two NrdG subunits.</text>
</comment>
<comment type="subcellular location">
    <subcellularLocation>
        <location evidence="2">Cytoplasm</location>
    </subcellularLocation>
</comment>
<comment type="similarity">
    <text evidence="3">Belongs to the organic radical-activating enzymes family.</text>
</comment>
<gene>
    <name type="primary">nrdG</name>
    <name type="ordered locus">Z5847</name>
    <name type="ordered locus">ECs5214</name>
</gene>
<keyword id="KW-0004">4Fe-4S</keyword>
<keyword id="KW-0963">Cytoplasm</keyword>
<keyword id="KW-0408">Iron</keyword>
<keyword id="KW-0411">Iron-sulfur</keyword>
<keyword id="KW-0479">Metal-binding</keyword>
<keyword id="KW-0560">Oxidoreductase</keyword>
<keyword id="KW-1185">Reference proteome</keyword>
<keyword id="KW-0949">S-adenosyl-L-methionine</keyword>
<protein>
    <recommendedName>
        <fullName evidence="2">Anaerobic ribonucleoside-triphosphate reductase-activating protein</fullName>
        <ecNumber evidence="2">1.97.1.-</ecNumber>
    </recommendedName>
    <alternativeName>
        <fullName evidence="2">Class III anaerobic ribonucleotide reductase small component</fullName>
    </alternativeName>
</protein>
<feature type="chain" id="PRO_0000200536" description="Anaerobic ribonucleoside-triphosphate reductase-activating protein">
    <location>
        <begin position="1"/>
        <end position="154"/>
    </location>
</feature>
<feature type="binding site" evidence="1">
    <location>
        <position position="26"/>
    </location>
    <ligand>
        <name>[4Fe-4S] cluster</name>
        <dbReference type="ChEBI" id="CHEBI:49883"/>
        <note>4Fe-4S-S-AdoMet</note>
    </ligand>
</feature>
<feature type="binding site" evidence="1">
    <location>
        <position position="30"/>
    </location>
    <ligand>
        <name>[4Fe-4S] cluster</name>
        <dbReference type="ChEBI" id="CHEBI:49883"/>
        <note>4Fe-4S-S-AdoMet</note>
    </ligand>
</feature>
<feature type="binding site" evidence="1">
    <location>
        <begin position="32"/>
        <end position="34"/>
    </location>
    <ligand>
        <name>S-adenosyl-L-methionine</name>
        <dbReference type="ChEBI" id="CHEBI:59789"/>
    </ligand>
</feature>
<feature type="binding site" evidence="1">
    <location>
        <position position="33"/>
    </location>
    <ligand>
        <name>[4Fe-4S] cluster</name>
        <dbReference type="ChEBI" id="CHEBI:49883"/>
        <note>4Fe-4S-S-AdoMet</note>
    </ligand>
</feature>
<feature type="binding site" evidence="1">
    <location>
        <position position="74"/>
    </location>
    <ligand>
        <name>S-adenosyl-L-methionine</name>
        <dbReference type="ChEBI" id="CHEBI:59789"/>
    </ligand>
</feature>
<sequence length="154" mass="17446">MNYHQYYPVDIVNGPGTRCTLFVSGCVHECPGCYNKSTWRVNSGQPFTKAMEDQIINDLNDTRIKRQGISLSGGDPLHPQNVPDILKLVQRIRAECPGKDIWVWTGYKLDELNAAQMQVVDLINVLVDGKFVQDLKDPSLIWRGSSNQVVHHLR</sequence>
<dbReference type="EC" id="1.97.1.-" evidence="2"/>
<dbReference type="EMBL" id="AE005174">
    <property type="protein sequence ID" value="AAG59434.1"/>
    <property type="molecule type" value="Genomic_DNA"/>
</dbReference>
<dbReference type="EMBL" id="BA000007">
    <property type="protein sequence ID" value="BAB38637.1"/>
    <property type="molecule type" value="Genomic_DNA"/>
</dbReference>
<dbReference type="PIR" id="F86121">
    <property type="entry name" value="F86121"/>
</dbReference>
<dbReference type="PIR" id="F91280">
    <property type="entry name" value="F91280"/>
</dbReference>
<dbReference type="RefSeq" id="NP_313241.1">
    <property type="nucleotide sequence ID" value="NC_002695.1"/>
</dbReference>
<dbReference type="RefSeq" id="WP_001106233.1">
    <property type="nucleotide sequence ID" value="NZ_VOAI01000023.1"/>
</dbReference>
<dbReference type="SMR" id="P0A9N9"/>
<dbReference type="STRING" id="155864.Z5847"/>
<dbReference type="GeneID" id="86861364"/>
<dbReference type="GeneID" id="913866"/>
<dbReference type="KEGG" id="ece:Z5847"/>
<dbReference type="KEGG" id="ecs:ECs_5214"/>
<dbReference type="PATRIC" id="fig|386585.9.peg.5450"/>
<dbReference type="eggNOG" id="COG0602">
    <property type="taxonomic scope" value="Bacteria"/>
</dbReference>
<dbReference type="HOGENOM" id="CLU_089926_2_1_6"/>
<dbReference type="OMA" id="NDTRIPR"/>
<dbReference type="Proteomes" id="UP000000558">
    <property type="component" value="Chromosome"/>
</dbReference>
<dbReference type="Proteomes" id="UP000002519">
    <property type="component" value="Chromosome"/>
</dbReference>
<dbReference type="GO" id="GO:0005737">
    <property type="term" value="C:cytoplasm"/>
    <property type="evidence" value="ECO:0007669"/>
    <property type="project" value="UniProtKB-SubCell"/>
</dbReference>
<dbReference type="GO" id="GO:0051539">
    <property type="term" value="F:4 iron, 4 sulfur cluster binding"/>
    <property type="evidence" value="ECO:0007669"/>
    <property type="project" value="UniProtKB-KW"/>
</dbReference>
<dbReference type="GO" id="GO:0043365">
    <property type="term" value="F:[formate-C-acetyltransferase]-activating enzyme activity"/>
    <property type="evidence" value="ECO:0007669"/>
    <property type="project" value="InterPro"/>
</dbReference>
<dbReference type="GO" id="GO:0046872">
    <property type="term" value="F:metal ion binding"/>
    <property type="evidence" value="ECO:0007669"/>
    <property type="project" value="UniProtKB-KW"/>
</dbReference>
<dbReference type="GO" id="GO:0004748">
    <property type="term" value="F:ribonucleoside-diphosphate reductase activity, thioredoxin disulfide as acceptor"/>
    <property type="evidence" value="ECO:0007669"/>
    <property type="project" value="TreeGrafter"/>
</dbReference>
<dbReference type="CDD" id="cd01335">
    <property type="entry name" value="Radical_SAM"/>
    <property type="match status" value="1"/>
</dbReference>
<dbReference type="FunFam" id="3.20.20.70:FF:000087">
    <property type="entry name" value="Anaerobic ribonucleoside-triphosphate reductase-activating protein"/>
    <property type="match status" value="1"/>
</dbReference>
<dbReference type="Gene3D" id="3.20.20.70">
    <property type="entry name" value="Aldolase class I"/>
    <property type="match status" value="1"/>
</dbReference>
<dbReference type="InterPro" id="IPR013785">
    <property type="entry name" value="Aldolase_TIM"/>
</dbReference>
<dbReference type="InterPro" id="IPR012837">
    <property type="entry name" value="NrdG"/>
</dbReference>
<dbReference type="InterPro" id="IPR034457">
    <property type="entry name" value="Organic_radical-activating"/>
</dbReference>
<dbReference type="InterPro" id="IPR001989">
    <property type="entry name" value="Radical_activat_CS"/>
</dbReference>
<dbReference type="InterPro" id="IPR007197">
    <property type="entry name" value="rSAM"/>
</dbReference>
<dbReference type="NCBIfam" id="TIGR02491">
    <property type="entry name" value="NrdG"/>
    <property type="match status" value="1"/>
</dbReference>
<dbReference type="NCBIfam" id="NF008335">
    <property type="entry name" value="PRK11121.1"/>
    <property type="match status" value="1"/>
</dbReference>
<dbReference type="PANTHER" id="PTHR30352:SF2">
    <property type="entry name" value="ANAEROBIC RIBONUCLEOSIDE-TRIPHOSPHATE REDUCTASE-ACTIVATING PROTEIN"/>
    <property type="match status" value="1"/>
</dbReference>
<dbReference type="PANTHER" id="PTHR30352">
    <property type="entry name" value="PYRUVATE FORMATE-LYASE-ACTIVATING ENZYME"/>
    <property type="match status" value="1"/>
</dbReference>
<dbReference type="Pfam" id="PF13353">
    <property type="entry name" value="Fer4_12"/>
    <property type="match status" value="1"/>
</dbReference>
<dbReference type="PIRSF" id="PIRSF000368">
    <property type="entry name" value="NrdG"/>
    <property type="match status" value="1"/>
</dbReference>
<dbReference type="SFLD" id="SFLDF00299">
    <property type="entry name" value="anaerobic_ribonucleoside-triph"/>
    <property type="match status" value="1"/>
</dbReference>
<dbReference type="SFLD" id="SFLDS00029">
    <property type="entry name" value="Radical_SAM"/>
    <property type="match status" value="1"/>
</dbReference>
<dbReference type="SUPFAM" id="SSF102114">
    <property type="entry name" value="Radical SAM enzymes"/>
    <property type="match status" value="1"/>
</dbReference>
<dbReference type="PROSITE" id="PS01087">
    <property type="entry name" value="RADICAL_ACTIVATING"/>
    <property type="match status" value="1"/>
</dbReference>
<evidence type="ECO:0000250" key="1">
    <source>
        <dbReference type="UniProtKB" id="P0A9N4"/>
    </source>
</evidence>
<evidence type="ECO:0000250" key="2">
    <source>
        <dbReference type="UniProtKB" id="P0A9N8"/>
    </source>
</evidence>
<evidence type="ECO:0000305" key="3"/>
<proteinExistence type="inferred from homology"/>